<feature type="chain" id="PRO_0000198597" description="Ribulose bisphosphate carboxylase small subunit">
    <location>
        <begin position="1"/>
        <end position="139"/>
    </location>
</feature>
<protein>
    <recommendedName>
        <fullName evidence="1">Ribulose bisphosphate carboxylase small subunit</fullName>
        <shortName evidence="1">RuBisCO small subunit</shortName>
    </recommendedName>
</protein>
<accession>P24395</accession>
<keyword id="KW-0113">Calvin cycle</keyword>
<keyword id="KW-0120">Carbon dioxide fixation</keyword>
<keyword id="KW-0150">Chloroplast</keyword>
<keyword id="KW-0601">Photorespiration</keyword>
<keyword id="KW-0602">Photosynthesis</keyword>
<keyword id="KW-0934">Plastid</keyword>
<reference key="1">
    <citation type="journal article" date="1990" name="Plant Mol. Biol.">
        <title>Rubisco genes indicate a close phylogenetic relation between the plastids of Chromophyta and Rhodophyta.</title>
        <authorList>
            <person name="Valentin K.-U."/>
            <person name="Zetsche K."/>
        </authorList>
    </citation>
    <scope>NUCLEOTIDE SEQUENCE [GENOMIC DNA]</scope>
    <source>
        <strain>Dillwyn / Lyngbye</strain>
    </source>
</reference>
<dbReference type="EMBL" id="X52503">
    <property type="protein sequence ID" value="CAA36744.1"/>
    <property type="molecule type" value="Genomic_DNA"/>
</dbReference>
<dbReference type="PIR" id="S13124">
    <property type="entry name" value="RKAUS"/>
</dbReference>
<dbReference type="SMR" id="P24395"/>
<dbReference type="eggNOG" id="ENOG502QTPB">
    <property type="taxonomic scope" value="Eukaryota"/>
</dbReference>
<dbReference type="GO" id="GO:0009507">
    <property type="term" value="C:chloroplast"/>
    <property type="evidence" value="ECO:0007669"/>
    <property type="project" value="UniProtKB-SubCell"/>
</dbReference>
<dbReference type="GO" id="GO:0016984">
    <property type="term" value="F:ribulose-bisphosphate carboxylase activity"/>
    <property type="evidence" value="ECO:0007669"/>
    <property type="project" value="UniProtKB-UniRule"/>
</dbReference>
<dbReference type="GO" id="GO:0019253">
    <property type="term" value="P:reductive pentose-phosphate cycle"/>
    <property type="evidence" value="ECO:0007669"/>
    <property type="project" value="UniProtKB-UniRule"/>
</dbReference>
<dbReference type="CDD" id="cd03527">
    <property type="entry name" value="RuBisCO_small"/>
    <property type="match status" value="1"/>
</dbReference>
<dbReference type="Gene3D" id="3.30.190.10">
    <property type="entry name" value="Ribulose bisphosphate carboxylase, small subunit"/>
    <property type="match status" value="1"/>
</dbReference>
<dbReference type="HAMAP" id="MF_00859">
    <property type="entry name" value="RuBisCO_S_bact"/>
    <property type="match status" value="1"/>
</dbReference>
<dbReference type="InterPro" id="IPR024681">
    <property type="entry name" value="RuBisCO_ssu"/>
</dbReference>
<dbReference type="InterPro" id="IPR000894">
    <property type="entry name" value="RuBisCO_ssu_dom"/>
</dbReference>
<dbReference type="InterPro" id="IPR036385">
    <property type="entry name" value="RuBisCO_ssu_sf"/>
</dbReference>
<dbReference type="PANTHER" id="PTHR31262">
    <property type="entry name" value="RIBULOSE BISPHOSPHATE CARBOXYLASE SMALL CHAIN 1, CHLOROPLASTIC"/>
    <property type="match status" value="1"/>
</dbReference>
<dbReference type="PANTHER" id="PTHR31262:SF23">
    <property type="entry name" value="RIBULOSE BISPHOSPHATE CARBOXYLASE SMALL SUBUNIT"/>
    <property type="match status" value="1"/>
</dbReference>
<dbReference type="Pfam" id="PF00101">
    <property type="entry name" value="RuBisCO_small"/>
    <property type="match status" value="1"/>
</dbReference>
<dbReference type="SMART" id="SM00961">
    <property type="entry name" value="RuBisCO_small"/>
    <property type="match status" value="1"/>
</dbReference>
<dbReference type="SUPFAM" id="SSF55239">
    <property type="entry name" value="RuBisCO, small subunit"/>
    <property type="match status" value="1"/>
</dbReference>
<geneLocation type="chloroplast"/>
<evidence type="ECO:0000255" key="1">
    <source>
        <dbReference type="HAMAP-Rule" id="MF_00859"/>
    </source>
</evidence>
<name>RBS_ECTSI</name>
<proteinExistence type="inferred from homology"/>
<sequence>MRVTQGCFSFLPDLSDDQIKQQVSYAMSKGWAVSVEWTDDPHPRNSYWELWGLPLFDVKDPAAVMYELAECRKVNPEGYIKINAFDASIGTESCVMSFIVQRPITEPGFYLERNEIHGRNIQYTISSYAVQARPSGDRY</sequence>
<gene>
    <name evidence="1" type="primary">rbcS</name>
</gene>
<comment type="function">
    <text evidence="1">RuBisCO catalyzes two reactions: the carboxylation of D-ribulose 1,5-bisphosphate, the primary event in carbon dioxide fixation, as well as the oxidative fragmentation of the pentose substrate in the photorespiration process. Both reactions occur simultaneously and in competition at the same active site. Although the small subunit is not catalytic it is essential for maximal activity.</text>
</comment>
<comment type="subunit">
    <text evidence="1">Heterohexadecamer of 8 large and 8 small subunits.</text>
</comment>
<comment type="subcellular location">
    <subcellularLocation>
        <location evidence="1">Plastid</location>
        <location evidence="1">Chloroplast</location>
    </subcellularLocation>
</comment>
<comment type="miscellaneous">
    <text evidence="1">The basic functional RuBisCO is composed of a large chain homodimer in a 'head-to-tail' conformation. In form I RuBisCO this homodimer is arranged in a barrel-like tetramer with the small subunits forming a tetrameric 'cap' on each end of the 'barrel'.</text>
</comment>
<comment type="similarity">
    <text evidence="1">Belongs to the RuBisCO small chain family.</text>
</comment>
<organism>
    <name type="scientific">Ectocarpus siliculosus</name>
    <name type="common">Brown alga</name>
    <name type="synonym">Conferva siliculosa</name>
    <dbReference type="NCBI Taxonomy" id="2880"/>
    <lineage>
        <taxon>Eukaryota</taxon>
        <taxon>Sar</taxon>
        <taxon>Stramenopiles</taxon>
        <taxon>Ochrophyta</taxon>
        <taxon>PX clade</taxon>
        <taxon>Phaeophyceae</taxon>
        <taxon>Ectocarpales</taxon>
        <taxon>Ectocarpaceae</taxon>
        <taxon>Ectocarpus</taxon>
    </lineage>
</organism>